<sequence length="157" mass="18664">MFDILMYLFENYVHSEVELLVDEDELTKELTRAGFHQSEILKALTWLERLAELQEGDKPYLCNHDQHSFRIYTKDEMDKLDVESRGFLLFLEQVKVLNVETREMVIDRVMELDEPTLILEDLKWVILMVLFNAPGHESAYEQMEDLIFEQPEGRLHS</sequence>
<feature type="chain" id="PRO_1000082449" description="Protein Smg homolog">
    <location>
        <begin position="1"/>
        <end position="157"/>
    </location>
</feature>
<evidence type="ECO:0000255" key="1">
    <source>
        <dbReference type="HAMAP-Rule" id="MF_00598"/>
    </source>
</evidence>
<name>SMG_SHEB9</name>
<proteinExistence type="inferred from homology"/>
<gene>
    <name evidence="1" type="primary">smg</name>
    <name type="ordered locus">Sbal195_0034</name>
</gene>
<protein>
    <recommendedName>
        <fullName evidence="1">Protein Smg homolog</fullName>
    </recommendedName>
</protein>
<dbReference type="EMBL" id="CP000891">
    <property type="protein sequence ID" value="ABX47216.1"/>
    <property type="molecule type" value="Genomic_DNA"/>
</dbReference>
<dbReference type="RefSeq" id="WP_006083793.1">
    <property type="nucleotide sequence ID" value="NC_009997.1"/>
</dbReference>
<dbReference type="SMR" id="A9KUA5"/>
<dbReference type="KEGG" id="sbn:Sbal195_0034"/>
<dbReference type="HOGENOM" id="CLU_133242_0_0_6"/>
<dbReference type="Proteomes" id="UP000000770">
    <property type="component" value="Chromosome"/>
</dbReference>
<dbReference type="HAMAP" id="MF_00598">
    <property type="entry name" value="Smg"/>
    <property type="match status" value="1"/>
</dbReference>
<dbReference type="InterPro" id="IPR007456">
    <property type="entry name" value="Smg"/>
</dbReference>
<dbReference type="NCBIfam" id="NF002897">
    <property type="entry name" value="PRK03430.1"/>
    <property type="match status" value="1"/>
</dbReference>
<dbReference type="PANTHER" id="PTHR38692">
    <property type="entry name" value="PROTEIN SMG"/>
    <property type="match status" value="1"/>
</dbReference>
<dbReference type="PANTHER" id="PTHR38692:SF1">
    <property type="entry name" value="PROTEIN SMG"/>
    <property type="match status" value="1"/>
</dbReference>
<dbReference type="Pfam" id="PF04361">
    <property type="entry name" value="DUF494"/>
    <property type="match status" value="1"/>
</dbReference>
<organism>
    <name type="scientific">Shewanella baltica (strain OS195)</name>
    <dbReference type="NCBI Taxonomy" id="399599"/>
    <lineage>
        <taxon>Bacteria</taxon>
        <taxon>Pseudomonadati</taxon>
        <taxon>Pseudomonadota</taxon>
        <taxon>Gammaproteobacteria</taxon>
        <taxon>Alteromonadales</taxon>
        <taxon>Shewanellaceae</taxon>
        <taxon>Shewanella</taxon>
    </lineage>
</organism>
<comment type="similarity">
    <text evidence="1">Belongs to the Smg family.</text>
</comment>
<accession>A9KUA5</accession>
<reference key="1">
    <citation type="submission" date="2007-11" db="EMBL/GenBank/DDBJ databases">
        <title>Complete sequence of chromosome of Shewanella baltica OS195.</title>
        <authorList>
            <consortium name="US DOE Joint Genome Institute"/>
            <person name="Copeland A."/>
            <person name="Lucas S."/>
            <person name="Lapidus A."/>
            <person name="Barry K."/>
            <person name="Glavina del Rio T."/>
            <person name="Dalin E."/>
            <person name="Tice H."/>
            <person name="Pitluck S."/>
            <person name="Chain P."/>
            <person name="Malfatti S."/>
            <person name="Shin M."/>
            <person name="Vergez L."/>
            <person name="Schmutz J."/>
            <person name="Larimer F."/>
            <person name="Land M."/>
            <person name="Hauser L."/>
            <person name="Kyrpides N."/>
            <person name="Kim E."/>
            <person name="Brettar I."/>
            <person name="Rodrigues J."/>
            <person name="Konstantinidis K."/>
            <person name="Klappenbach J."/>
            <person name="Hofle M."/>
            <person name="Tiedje J."/>
            <person name="Richardson P."/>
        </authorList>
    </citation>
    <scope>NUCLEOTIDE SEQUENCE [LARGE SCALE GENOMIC DNA]</scope>
    <source>
        <strain>OS195</strain>
    </source>
</reference>